<dbReference type="PIR" id="S15411">
    <property type="entry name" value="S15411"/>
</dbReference>
<dbReference type="SMR" id="P23740"/>
<dbReference type="STRING" id="7897.ENSLACP00000006614"/>
<dbReference type="eggNOG" id="KOG3378">
    <property type="taxonomic scope" value="Eukaryota"/>
</dbReference>
<dbReference type="InParanoid" id="P23740"/>
<dbReference type="OMA" id="MVKAFWA"/>
<dbReference type="Proteomes" id="UP000008672">
    <property type="component" value="Unassembled WGS sequence"/>
</dbReference>
<dbReference type="GO" id="GO:0072562">
    <property type="term" value="C:blood microparticle"/>
    <property type="evidence" value="ECO:0007669"/>
    <property type="project" value="TreeGrafter"/>
</dbReference>
<dbReference type="GO" id="GO:0031838">
    <property type="term" value="C:haptoglobin-hemoglobin complex"/>
    <property type="evidence" value="ECO:0007669"/>
    <property type="project" value="TreeGrafter"/>
</dbReference>
<dbReference type="GO" id="GO:0005833">
    <property type="term" value="C:hemoglobin complex"/>
    <property type="evidence" value="ECO:0007669"/>
    <property type="project" value="InterPro"/>
</dbReference>
<dbReference type="GO" id="GO:0031720">
    <property type="term" value="F:haptoglobin binding"/>
    <property type="evidence" value="ECO:0007669"/>
    <property type="project" value="TreeGrafter"/>
</dbReference>
<dbReference type="GO" id="GO:0020037">
    <property type="term" value="F:heme binding"/>
    <property type="evidence" value="ECO:0007669"/>
    <property type="project" value="InterPro"/>
</dbReference>
<dbReference type="GO" id="GO:0046872">
    <property type="term" value="F:metal ion binding"/>
    <property type="evidence" value="ECO:0007669"/>
    <property type="project" value="UniProtKB-KW"/>
</dbReference>
<dbReference type="GO" id="GO:0043177">
    <property type="term" value="F:organic acid binding"/>
    <property type="evidence" value="ECO:0007669"/>
    <property type="project" value="TreeGrafter"/>
</dbReference>
<dbReference type="GO" id="GO:0019825">
    <property type="term" value="F:oxygen binding"/>
    <property type="evidence" value="ECO:0007669"/>
    <property type="project" value="InterPro"/>
</dbReference>
<dbReference type="GO" id="GO:0005344">
    <property type="term" value="F:oxygen carrier activity"/>
    <property type="evidence" value="ECO:0007669"/>
    <property type="project" value="UniProtKB-KW"/>
</dbReference>
<dbReference type="GO" id="GO:0004601">
    <property type="term" value="F:peroxidase activity"/>
    <property type="evidence" value="ECO:0007669"/>
    <property type="project" value="TreeGrafter"/>
</dbReference>
<dbReference type="GO" id="GO:0042744">
    <property type="term" value="P:hydrogen peroxide catabolic process"/>
    <property type="evidence" value="ECO:0007669"/>
    <property type="project" value="TreeGrafter"/>
</dbReference>
<dbReference type="CDD" id="cd08927">
    <property type="entry name" value="Hb-alpha-like"/>
    <property type="match status" value="1"/>
</dbReference>
<dbReference type="FunFam" id="1.10.490.10:FF:000002">
    <property type="entry name" value="Hemoglobin subunit alpha"/>
    <property type="match status" value="1"/>
</dbReference>
<dbReference type="Gene3D" id="1.10.490.10">
    <property type="entry name" value="Globins"/>
    <property type="match status" value="1"/>
</dbReference>
<dbReference type="InterPro" id="IPR000971">
    <property type="entry name" value="Globin"/>
</dbReference>
<dbReference type="InterPro" id="IPR009050">
    <property type="entry name" value="Globin-like_sf"/>
</dbReference>
<dbReference type="InterPro" id="IPR012292">
    <property type="entry name" value="Globin/Proto"/>
</dbReference>
<dbReference type="InterPro" id="IPR002338">
    <property type="entry name" value="Hemoglobin_a-typ"/>
</dbReference>
<dbReference type="InterPro" id="IPR050056">
    <property type="entry name" value="Hemoglobin_oxygen_transport"/>
</dbReference>
<dbReference type="PANTHER" id="PTHR11442">
    <property type="entry name" value="HEMOGLOBIN FAMILY MEMBER"/>
    <property type="match status" value="1"/>
</dbReference>
<dbReference type="Pfam" id="PF00042">
    <property type="entry name" value="Globin"/>
    <property type="match status" value="1"/>
</dbReference>
<dbReference type="PRINTS" id="PR00612">
    <property type="entry name" value="ALPHAHAEM"/>
</dbReference>
<dbReference type="SUPFAM" id="SSF46458">
    <property type="entry name" value="Globin-like"/>
    <property type="match status" value="1"/>
</dbReference>
<dbReference type="PROSITE" id="PS01033">
    <property type="entry name" value="GLOBIN"/>
    <property type="match status" value="1"/>
</dbReference>
<gene>
    <name type="primary">HBA</name>
</gene>
<evidence type="ECO:0000255" key="1">
    <source>
        <dbReference type="PROSITE-ProRule" id="PRU00238"/>
    </source>
</evidence>
<reference key="1">
    <citation type="journal article" date="1991" name="Biol. Chem. Hoppe-Seyler">
        <title>A 'living fossil' sequence: primary structure of the coelacanth (Latimeria chalumnae) hemoglobin -- evolutionary and functional aspects.</title>
        <authorList>
            <person name="Gorr T."/>
            <person name="Kleinschmidt T."/>
            <person name="Sgouros J.G."/>
            <person name="Kasang L."/>
        </authorList>
    </citation>
    <scope>PROTEIN SEQUENCE</scope>
</reference>
<reference key="2">
    <citation type="journal article" date="1991" name="Nature">
        <title>Close tetrapod relationships of the coelacanth Latimeria indicated by haemoglobin sequences.</title>
        <authorList>
            <person name="Gorr T."/>
            <person name="Kleinschmidt T."/>
            <person name="Fricke H."/>
        </authorList>
    </citation>
    <scope>PHYLOGENETIC COMPARISONS</scope>
</reference>
<sequence length="142" mass="15867">GLTAADKTLIKSIWGKVEKETEAIGVEALVRLFKCFPQSKVYFDHFTDLSPSSQKLHAHAKVVLGALTKAVNHLDNITDTLHDISLVHAKKLLVDPVNFELLGHCLEVALAAHFATDFTPEVHLAIDKFLYEVEKALFETYR</sequence>
<accession>P23740</accession>
<organism>
    <name type="scientific">Latimeria chalumnae</name>
    <name type="common">Coelacanth</name>
    <dbReference type="NCBI Taxonomy" id="7897"/>
    <lineage>
        <taxon>Eukaryota</taxon>
        <taxon>Metazoa</taxon>
        <taxon>Chordata</taxon>
        <taxon>Craniata</taxon>
        <taxon>Vertebrata</taxon>
        <taxon>Euteleostomi</taxon>
        <taxon>Coelacanthiformes</taxon>
        <taxon>Coelacanthidae</taxon>
        <taxon>Latimeria</taxon>
    </lineage>
</organism>
<proteinExistence type="evidence at protein level"/>
<keyword id="KW-0903">Direct protein sequencing</keyword>
<keyword id="KW-0349">Heme</keyword>
<keyword id="KW-0408">Iron</keyword>
<keyword id="KW-0479">Metal-binding</keyword>
<keyword id="KW-0561">Oxygen transport</keyword>
<keyword id="KW-1185">Reference proteome</keyword>
<keyword id="KW-0813">Transport</keyword>
<name>HBA_LATCH</name>
<feature type="chain" id="PRO_0000052662" description="Hemoglobin subunit alpha">
    <location>
        <begin position="1"/>
        <end position="142"/>
    </location>
</feature>
<feature type="domain" description="Globin" evidence="1">
    <location>
        <begin position="1"/>
        <end position="142"/>
    </location>
</feature>
<feature type="binding site" evidence="1">
    <location>
        <position position="59"/>
    </location>
    <ligand>
        <name>O2</name>
        <dbReference type="ChEBI" id="CHEBI:15379"/>
    </ligand>
</feature>
<feature type="binding site" description="proximal binding residue" evidence="1">
    <location>
        <position position="88"/>
    </location>
    <ligand>
        <name>heme b</name>
        <dbReference type="ChEBI" id="CHEBI:60344"/>
    </ligand>
    <ligandPart>
        <name>Fe</name>
        <dbReference type="ChEBI" id="CHEBI:18248"/>
    </ligandPart>
</feature>
<comment type="function">
    <text>Involved in oxygen transport from the lung to the various peripheral tissues.</text>
</comment>
<comment type="subunit">
    <text>Heterotetramer of two alpha chains and two beta chains (an easy dimerization is also reported).</text>
</comment>
<comment type="tissue specificity">
    <text>Red blood cells.</text>
</comment>
<comment type="similarity">
    <text evidence="1">Belongs to the globin family.</text>
</comment>
<protein>
    <recommendedName>
        <fullName>Hemoglobin subunit alpha</fullName>
    </recommendedName>
    <alternativeName>
        <fullName>Alpha-globin</fullName>
    </alternativeName>
    <alternativeName>
        <fullName>Hemoglobin alpha chain</fullName>
    </alternativeName>
</protein>